<organism>
    <name type="scientific">Sulfolobus acidocaldarius (strain ATCC 33909 / DSM 639 / JCM 8929 / NBRC 15157 / NCIMB 11770)</name>
    <dbReference type="NCBI Taxonomy" id="330779"/>
    <lineage>
        <taxon>Archaea</taxon>
        <taxon>Thermoproteota</taxon>
        <taxon>Thermoprotei</taxon>
        <taxon>Sulfolobales</taxon>
        <taxon>Sulfolobaceae</taxon>
        <taxon>Sulfolobus</taxon>
    </lineage>
</organism>
<keyword id="KW-0002">3D-structure</keyword>
<keyword id="KW-1185">Reference proteome</keyword>
<keyword id="KW-0687">Ribonucleoprotein</keyword>
<keyword id="KW-0689">Ribosomal protein</keyword>
<feature type="chain" id="PRO_0000137655" description="Small ribosomal subunit protein eS24">
    <location>
        <begin position="1"/>
        <end position="118"/>
    </location>
</feature>
<name>RS24_SULAC</name>
<sequence length="118" mass="13245">MSQQIKIKVSDKVEGIVERDIQNNVANRRELYIKLFHIGSGTPSRKELVKAIASTFSTAEDLVVVKKVFTNYGSGISYARVNVYKDKDSLQKLEPQYLIGRDTGQKIKKGGKSAQKQQ</sequence>
<accession>Q4JAF9</accession>
<dbReference type="EMBL" id="CP000077">
    <property type="protein sequence ID" value="AAY80220.1"/>
    <property type="molecule type" value="Genomic_DNA"/>
</dbReference>
<dbReference type="RefSeq" id="WP_011277722.1">
    <property type="nucleotide sequence ID" value="NC_007181.1"/>
</dbReference>
<dbReference type="PDB" id="8HKX">
    <property type="method" value="EM"/>
    <property type="resolution" value="3.14 A"/>
    <property type="chains" value="S24E=9-104"/>
</dbReference>
<dbReference type="PDB" id="8HKY">
    <property type="method" value="EM"/>
    <property type="resolution" value="4.45 A"/>
    <property type="chains" value="S24E=9-104"/>
</dbReference>
<dbReference type="PDB" id="8HKZ">
    <property type="method" value="EM"/>
    <property type="resolution" value="4.78 A"/>
    <property type="chains" value="S24E=9-104"/>
</dbReference>
<dbReference type="PDB" id="8HL1">
    <property type="method" value="EM"/>
    <property type="resolution" value="3.93 A"/>
    <property type="chains" value="S24E=9-104"/>
</dbReference>
<dbReference type="PDB" id="8HL2">
    <property type="method" value="EM"/>
    <property type="resolution" value="4.10 A"/>
    <property type="chains" value="S24E=9-104"/>
</dbReference>
<dbReference type="PDB" id="8HL3">
    <property type="method" value="EM"/>
    <property type="resolution" value="4.80 A"/>
    <property type="chains" value="S24E=9-104"/>
</dbReference>
<dbReference type="PDB" id="8HL4">
    <property type="method" value="EM"/>
    <property type="resolution" value="4.62 A"/>
    <property type="chains" value="S24E=9-104"/>
</dbReference>
<dbReference type="PDB" id="8HL5">
    <property type="method" value="EM"/>
    <property type="resolution" value="5.72 A"/>
    <property type="chains" value="S24E=9-104"/>
</dbReference>
<dbReference type="PDB" id="8WKP">
    <property type="method" value="EM"/>
    <property type="resolution" value="4.62 A"/>
    <property type="chains" value="S24E=9-104"/>
</dbReference>
<dbReference type="PDB" id="8WQ2">
    <property type="method" value="EM"/>
    <property type="resolution" value="4.10 A"/>
    <property type="chains" value="S24E=9-104"/>
</dbReference>
<dbReference type="PDB" id="8WQ4">
    <property type="method" value="EM"/>
    <property type="resolution" value="4.53 A"/>
    <property type="chains" value="S24E=9-104"/>
</dbReference>
<dbReference type="PDBsum" id="8HKX"/>
<dbReference type="PDBsum" id="8HKY"/>
<dbReference type="PDBsum" id="8HKZ"/>
<dbReference type="PDBsum" id="8HL1"/>
<dbReference type="PDBsum" id="8HL2"/>
<dbReference type="PDBsum" id="8HL3"/>
<dbReference type="PDBsum" id="8HL4"/>
<dbReference type="PDBsum" id="8HL5"/>
<dbReference type="PDBsum" id="8WKP"/>
<dbReference type="PDBsum" id="8WQ2"/>
<dbReference type="PDBsum" id="8WQ4"/>
<dbReference type="EMDB" id="EMD-34862"/>
<dbReference type="EMDB" id="EMD-34863"/>
<dbReference type="EMDB" id="EMD-34864"/>
<dbReference type="EMDB" id="EMD-34866"/>
<dbReference type="EMDB" id="EMD-34867"/>
<dbReference type="EMDB" id="EMD-34868"/>
<dbReference type="EMDB" id="EMD-34869"/>
<dbReference type="EMDB" id="EMD-34870"/>
<dbReference type="EMDB" id="EMD-37604"/>
<dbReference type="EMDB" id="EMD-37733"/>
<dbReference type="EMDB" id="EMD-37734"/>
<dbReference type="SMR" id="Q4JAF9"/>
<dbReference type="STRING" id="330779.Saci_0853"/>
<dbReference type="GeneID" id="14551366"/>
<dbReference type="KEGG" id="sai:Saci_0853"/>
<dbReference type="PATRIC" id="fig|330779.12.peg.817"/>
<dbReference type="eggNOG" id="arCOG04182">
    <property type="taxonomic scope" value="Archaea"/>
</dbReference>
<dbReference type="HOGENOM" id="CLU_107248_3_2_2"/>
<dbReference type="Proteomes" id="UP000001018">
    <property type="component" value="Chromosome"/>
</dbReference>
<dbReference type="GO" id="GO:1990904">
    <property type="term" value="C:ribonucleoprotein complex"/>
    <property type="evidence" value="ECO:0007669"/>
    <property type="project" value="UniProtKB-KW"/>
</dbReference>
<dbReference type="GO" id="GO:0005840">
    <property type="term" value="C:ribosome"/>
    <property type="evidence" value="ECO:0007669"/>
    <property type="project" value="UniProtKB-KW"/>
</dbReference>
<dbReference type="GO" id="GO:0003735">
    <property type="term" value="F:structural constituent of ribosome"/>
    <property type="evidence" value="ECO:0007669"/>
    <property type="project" value="InterPro"/>
</dbReference>
<dbReference type="GO" id="GO:0006412">
    <property type="term" value="P:translation"/>
    <property type="evidence" value="ECO:0007669"/>
    <property type="project" value="UniProtKB-UniRule"/>
</dbReference>
<dbReference type="Gene3D" id="3.30.70.3370">
    <property type="match status" value="1"/>
</dbReference>
<dbReference type="HAMAP" id="MF_00545">
    <property type="entry name" value="Ribosomal_eS24"/>
    <property type="match status" value="1"/>
</dbReference>
<dbReference type="InterPro" id="IPR053709">
    <property type="entry name" value="eRP_eS24_sf"/>
</dbReference>
<dbReference type="InterPro" id="IPR001976">
    <property type="entry name" value="Ribosomal_eS24"/>
</dbReference>
<dbReference type="InterPro" id="IPR018098">
    <property type="entry name" value="Ribosomal_eS24_CS"/>
</dbReference>
<dbReference type="InterPro" id="IPR012678">
    <property type="entry name" value="Ribosomal_uL23/eL15/eS24_sf"/>
</dbReference>
<dbReference type="PANTHER" id="PTHR10496">
    <property type="entry name" value="40S RIBOSOMAL PROTEIN S24"/>
    <property type="match status" value="1"/>
</dbReference>
<dbReference type="Pfam" id="PF01282">
    <property type="entry name" value="Ribosomal_S24e"/>
    <property type="match status" value="1"/>
</dbReference>
<dbReference type="SUPFAM" id="SSF54189">
    <property type="entry name" value="Ribosomal proteins S24e, L23 and L15e"/>
    <property type="match status" value="1"/>
</dbReference>
<dbReference type="PROSITE" id="PS00529">
    <property type="entry name" value="RIBOSOMAL_S24E"/>
    <property type="match status" value="1"/>
</dbReference>
<proteinExistence type="evidence at protein level"/>
<evidence type="ECO:0000255" key="1">
    <source>
        <dbReference type="HAMAP-Rule" id="MF_00545"/>
    </source>
</evidence>
<evidence type="ECO:0000305" key="2"/>
<gene>
    <name evidence="1" type="primary">rps24e</name>
    <name type="ordered locus">Saci_0853</name>
</gene>
<protein>
    <recommendedName>
        <fullName evidence="1">Small ribosomal subunit protein eS24</fullName>
    </recommendedName>
    <alternativeName>
        <fullName evidence="2">30S ribosomal protein S24e</fullName>
    </alternativeName>
</protein>
<reference key="1">
    <citation type="journal article" date="2005" name="J. Bacteriol.">
        <title>The genome of Sulfolobus acidocaldarius, a model organism of the Crenarchaeota.</title>
        <authorList>
            <person name="Chen L."/>
            <person name="Bruegger K."/>
            <person name="Skovgaard M."/>
            <person name="Redder P."/>
            <person name="She Q."/>
            <person name="Torarinsson E."/>
            <person name="Greve B."/>
            <person name="Awayez M."/>
            <person name="Zibat A."/>
            <person name="Klenk H.-P."/>
            <person name="Garrett R.A."/>
        </authorList>
    </citation>
    <scope>NUCLEOTIDE SEQUENCE [LARGE SCALE GENOMIC DNA]</scope>
    <source>
        <strain>ATCC 33909 / DSM 639 / JCM 8929 / NBRC 15157 / NCIMB 11770</strain>
    </source>
</reference>
<comment type="similarity">
    <text evidence="1">Belongs to the eukaryotic ribosomal protein eS24 family.</text>
</comment>